<proteinExistence type="evidence at protein level"/>
<comment type="function">
    <text evidence="3">Synthetic BmK-YA activates human opioid receptors in vitro, with highest activity on the delta-type/OPRD1 receptor (EC(50)=2.5 uM) and lower activity on mu-type/OPRM1 and kappa-type/OPRK1 receptors (EC(50)=17 uM and 30 uM, respectively).</text>
</comment>
<comment type="subcellular location">
    <subcellularLocation>
        <location evidence="3">Secreted</location>
    </subcellularLocation>
</comment>
<comment type="tissue specificity">
    <text evidence="6">Venom gland.</text>
</comment>
<comment type="mass spectrometry">
    <text>The measured ranges are 35-42, 101-108, 145-152, 189-196.</text>
</comment>
<comment type="miscellaneous">
    <text evidence="3 5">Four additional, similar peptides (containing a substitution of Tyr-4 to His-4) are predicted from this sequence: however, there is no evidence that they exist in vivo and the synthetic peptide has no known function.</text>
</comment>
<comment type="sequence caution" evidence="5">
    <conflict type="erroneous initiation">
        <sequence resource="EMBL-CDS" id="AAD39510"/>
    </conflict>
    <text>Truncated N-terminus.</text>
</comment>
<keyword id="KW-0027">Amidation</keyword>
<keyword id="KW-0903">Direct protein sequencing</keyword>
<keyword id="KW-1213">G-protein coupled receptor impairing toxin</keyword>
<keyword id="KW-0964">Secreted</keyword>
<keyword id="KW-0732">Signal</keyword>
<keyword id="KW-0800">Toxin</keyword>
<reference key="1">
    <citation type="journal article" date="2012" name="PLoS ONE">
        <title>BmK-YA, an enkephalin-like peptide in scorpion venom.</title>
        <authorList>
            <person name="Zhang Y."/>
            <person name="Xu J."/>
            <person name="Wang Z."/>
            <person name="Zhang X."/>
            <person name="Liang X."/>
            <person name="Civelli O."/>
        </authorList>
    </citation>
    <scope>NUCLEOTIDE SEQUENCE [MRNA]</scope>
    <scope>PROTEIN SEQUENCE OF 35-42; 101-108; 145-152 AND 189-196</scope>
    <scope>SYNTHESIS</scope>
    <scope>FUNCTION</scope>
    <scope>SUBCELLULAR LOCATION</scope>
    <scope>MASS SPECTROMETRY</scope>
    <scope>AMIDATION AT ALA-42; ALA-108; ALA-152 AND ALA-196</scope>
    <scope>MUTAGENESIS OF TYR-38; TYR-104; TYR-148 AND TYR-192</scope>
    <source>
        <tissue>Venom</tissue>
    </source>
</reference>
<reference key="2">
    <citation type="submission" date="1999-04" db="EMBL/GenBank/DDBJ databases">
        <authorList>
            <person name="Wenxin L."/>
            <person name="Shunyi Z."/>
        </authorList>
    </citation>
    <scope>NUCLEOTIDE SEQUENCE [MRNA] OF 106-200</scope>
    <source>
        <tissue>Venom gland</tissue>
    </source>
</reference>
<evidence type="ECO:0000255" key="1"/>
<evidence type="ECO:0000256" key="2">
    <source>
        <dbReference type="SAM" id="MobiDB-lite"/>
    </source>
</evidence>
<evidence type="ECO:0000269" key="3">
    <source>
    </source>
</evidence>
<evidence type="ECO:0000303" key="4">
    <source>
    </source>
</evidence>
<evidence type="ECO:0000305" key="5"/>
<evidence type="ECO:0000305" key="6">
    <source>
    </source>
</evidence>
<protein>
    <recommendedName>
        <fullName evidence="4">BmK-YA precursor</fullName>
    </recommendedName>
    <component>
        <recommendedName>
            <fullName evidence="4">BmK-YA 1</fullName>
        </recommendedName>
        <alternativeName>
            <fullName evidence="4">Enkephalin-like peptide 1</fullName>
        </alternativeName>
    </component>
    <component>
        <recommendedName>
            <fullName evidence="4">BmK-YA 2</fullName>
        </recommendedName>
        <alternativeName>
            <fullName evidence="4">Enkephalin-like peptide 2</fullName>
        </alternativeName>
    </component>
    <component>
        <recommendedName>
            <fullName evidence="4">BmK-YA 3</fullName>
        </recommendedName>
        <alternativeName>
            <fullName evidence="4">Enkephalin-like peptide 3</fullName>
        </alternativeName>
    </component>
    <component>
        <recommendedName>
            <fullName evidence="4">BmK-YA 4</fullName>
        </recommendedName>
        <alternativeName>
            <fullName evidence="4">Enkephalin-like peptide 4</fullName>
        </alternativeName>
    </component>
</protein>
<dbReference type="EMBL" id="AF146742">
    <property type="protein sequence ID" value="AAD39510.1"/>
    <property type="status" value="ALT_INIT"/>
    <property type="molecule type" value="mRNA"/>
</dbReference>
<dbReference type="GO" id="GO:0005576">
    <property type="term" value="C:extracellular region"/>
    <property type="evidence" value="ECO:0007669"/>
    <property type="project" value="UniProtKB-SubCell"/>
</dbReference>
<dbReference type="GO" id="GO:0001515">
    <property type="term" value="F:opioid peptide activity"/>
    <property type="evidence" value="ECO:0000314"/>
    <property type="project" value="CACAO"/>
</dbReference>
<dbReference type="GO" id="GO:0090729">
    <property type="term" value="F:toxin activity"/>
    <property type="evidence" value="ECO:0007669"/>
    <property type="project" value="UniProtKB-KW"/>
</dbReference>
<feature type="signal peptide" evidence="1">
    <location>
        <begin position="1"/>
        <end position="23"/>
    </location>
</feature>
<feature type="propeptide" id="PRO_0000423811" evidence="3">
    <location>
        <begin position="24"/>
        <end position="34"/>
    </location>
</feature>
<feature type="peptide" id="PRO_0000423812" description="BmK-YA 1" evidence="3">
    <location>
        <begin position="35"/>
        <end position="42"/>
    </location>
</feature>
<feature type="propeptide" id="PRO_0000423813" evidence="3">
    <location>
        <begin position="45"/>
        <end position="100"/>
    </location>
</feature>
<feature type="peptide" id="PRO_0000423814" description="BmK-YA 2" evidence="3">
    <location>
        <begin position="101"/>
        <end position="108"/>
    </location>
</feature>
<feature type="propeptide" id="PRO_0000423815" evidence="3">
    <location>
        <begin position="111"/>
        <end position="144"/>
    </location>
</feature>
<feature type="peptide" id="PRO_0000423816" description="BmK-YA 3" evidence="3">
    <location>
        <begin position="145"/>
        <end position="152"/>
    </location>
</feature>
<feature type="propeptide" id="PRO_0000423817" evidence="3">
    <location>
        <begin position="155"/>
        <end position="188"/>
    </location>
</feature>
<feature type="peptide" id="PRO_0000423818" description="BmK-YA 4" evidence="3">
    <location>
        <begin position="189"/>
        <end position="196"/>
    </location>
</feature>
<feature type="propeptide" id="PRO_0000423819" evidence="3">
    <location>
        <begin position="199"/>
        <end position="200"/>
    </location>
</feature>
<feature type="region of interest" description="Disordered" evidence="2">
    <location>
        <begin position="30"/>
        <end position="200"/>
    </location>
</feature>
<feature type="modified residue" description="Alanine amide" evidence="3">
    <location>
        <position position="42"/>
    </location>
</feature>
<feature type="modified residue" description="Alanine amide" evidence="3">
    <location>
        <position position="108"/>
    </location>
</feature>
<feature type="modified residue" description="Alanine amide" evidence="3">
    <location>
        <position position="152"/>
    </location>
</feature>
<feature type="modified residue" description="Alanine amide" evidence="3">
    <location>
        <position position="196"/>
    </location>
</feature>
<feature type="mutagenesis site" description="Increased potency on delta-type, mu-type and kappa-type opioid receptors." evidence="3">
    <original>Y</original>
    <variation>F</variation>
    <location>
        <position position="38"/>
    </location>
</feature>
<feature type="mutagenesis site" description="Increased potency on delta-type, mu-type and kappa-type opioid receptors." evidence="3">
    <original>Y</original>
    <variation>F</variation>
    <location>
        <position position="104"/>
    </location>
</feature>
<feature type="mutagenesis site" description="Increased potency on delta-type, mu-type and kappa-type opioid receptors." evidence="3">
    <original>Y</original>
    <variation>F</variation>
    <location>
        <position position="148"/>
    </location>
</feature>
<feature type="mutagenesis site" description="Increased potency on delta-type, mu-type and kappa-type opioid receptors." evidence="3">
    <original>Y</original>
    <variation>F</variation>
    <location>
        <position position="192"/>
    </location>
</feature>
<name>YA_OLIMR</name>
<organism>
    <name type="scientific">Olivierus martensii</name>
    <name type="common">Manchurian scorpion</name>
    <name type="synonym">Mesobuthus martensii</name>
    <dbReference type="NCBI Taxonomy" id="34649"/>
    <lineage>
        <taxon>Eukaryota</taxon>
        <taxon>Metazoa</taxon>
        <taxon>Ecdysozoa</taxon>
        <taxon>Arthropoda</taxon>
        <taxon>Chelicerata</taxon>
        <taxon>Arachnida</taxon>
        <taxon>Scorpiones</taxon>
        <taxon>Buthida</taxon>
        <taxon>Buthoidea</taxon>
        <taxon>Buthidae</taxon>
        <taxon>Olivierus</taxon>
    </lineage>
</organism>
<accession>Q9Y0X6</accession>
<sequence>MIFHQFYSILILCLIFPNQVVQSDKERQDWIPSDYGGYMNPAGRSDEERQDWIPSDYGGHMNPAGRSDEERQDWIPSDYGGHMNPAGRSNEERQDWIPSDYGGYMNPAGRSDEERQDWIPSDYGGHMNPAGRSNEERQDWIPSDYGGYMNPAGRSDEERQDWIPSDYGGHMNPAGRSDEERQDWIPSDYGGYMNPAGRSD</sequence>